<reference key="1">
    <citation type="journal article" date="2003" name="Gene">
        <title>Novel sequences encoding venom C-type lectins are conserved in phylogenetically and geographically distinct Echis and Bitis viper species.</title>
        <authorList>
            <person name="Harrison R.A."/>
            <person name="Oliver J."/>
            <person name="Hasson S.S."/>
            <person name="Bharati K."/>
            <person name="Theakston R.D.G."/>
        </authorList>
    </citation>
    <scope>NUCLEOTIDE SEQUENCE [MRNA]</scope>
    <source>
        <tissue>Venom gland</tissue>
    </source>
</reference>
<proteinExistence type="evidence at transcript level"/>
<dbReference type="EMBL" id="AY254336">
    <property type="protein sequence ID" value="AAQ01217.1"/>
    <property type="molecule type" value="mRNA"/>
</dbReference>
<dbReference type="SMR" id="Q6X5S4"/>
<dbReference type="GO" id="GO:0005576">
    <property type="term" value="C:extracellular region"/>
    <property type="evidence" value="ECO:0007669"/>
    <property type="project" value="UniProtKB-SubCell"/>
</dbReference>
<dbReference type="GO" id="GO:0090729">
    <property type="term" value="F:toxin activity"/>
    <property type="evidence" value="ECO:0007669"/>
    <property type="project" value="UniProtKB-KW"/>
</dbReference>
<dbReference type="FunFam" id="3.10.100.10:FF:000087">
    <property type="entry name" value="Snaclec rhodocetin subunit delta"/>
    <property type="match status" value="1"/>
</dbReference>
<dbReference type="Gene3D" id="3.10.100.10">
    <property type="entry name" value="Mannose-Binding Protein A, subunit A"/>
    <property type="match status" value="1"/>
</dbReference>
<dbReference type="InterPro" id="IPR001304">
    <property type="entry name" value="C-type_lectin-like"/>
</dbReference>
<dbReference type="InterPro" id="IPR016186">
    <property type="entry name" value="C-type_lectin-like/link_sf"/>
</dbReference>
<dbReference type="InterPro" id="IPR050111">
    <property type="entry name" value="C-type_lectin/snaclec_domain"/>
</dbReference>
<dbReference type="InterPro" id="IPR018378">
    <property type="entry name" value="C-type_lectin_CS"/>
</dbReference>
<dbReference type="InterPro" id="IPR016187">
    <property type="entry name" value="CTDL_fold"/>
</dbReference>
<dbReference type="PANTHER" id="PTHR22803">
    <property type="entry name" value="MANNOSE, PHOSPHOLIPASE, LECTIN RECEPTOR RELATED"/>
    <property type="match status" value="1"/>
</dbReference>
<dbReference type="Pfam" id="PF00059">
    <property type="entry name" value="Lectin_C"/>
    <property type="match status" value="1"/>
</dbReference>
<dbReference type="SMART" id="SM00034">
    <property type="entry name" value="CLECT"/>
    <property type="match status" value="1"/>
</dbReference>
<dbReference type="SUPFAM" id="SSF56436">
    <property type="entry name" value="C-type lectin-like"/>
    <property type="match status" value="1"/>
</dbReference>
<dbReference type="PROSITE" id="PS00615">
    <property type="entry name" value="C_TYPE_LECTIN_1"/>
    <property type="match status" value="1"/>
</dbReference>
<dbReference type="PROSITE" id="PS50041">
    <property type="entry name" value="C_TYPE_LECTIN_2"/>
    <property type="match status" value="1"/>
</dbReference>
<accession>Q6X5S4</accession>
<name>SL9_ECHCS</name>
<protein>
    <recommendedName>
        <fullName>Snaclec 9</fullName>
    </recommendedName>
    <alternativeName>
        <fullName>C-type lectin 9</fullName>
        <shortName>CTL-9</shortName>
    </alternativeName>
</protein>
<organism>
    <name type="scientific">Echis carinatus sochureki</name>
    <name type="common">Saw-scaled viper</name>
    <dbReference type="NCBI Taxonomy" id="124223"/>
    <lineage>
        <taxon>Eukaryota</taxon>
        <taxon>Metazoa</taxon>
        <taxon>Chordata</taxon>
        <taxon>Craniata</taxon>
        <taxon>Vertebrata</taxon>
        <taxon>Euteleostomi</taxon>
        <taxon>Lepidosauria</taxon>
        <taxon>Squamata</taxon>
        <taxon>Bifurcata</taxon>
        <taxon>Unidentata</taxon>
        <taxon>Episquamata</taxon>
        <taxon>Toxicofera</taxon>
        <taxon>Serpentes</taxon>
        <taxon>Colubroidea</taxon>
        <taxon>Viperidae</taxon>
        <taxon>Viperinae</taxon>
        <taxon>Echis</taxon>
    </lineage>
</organism>
<feature type="signal peptide" evidence="2">
    <location>
        <begin position="1"/>
        <end position="23"/>
    </location>
</feature>
<feature type="chain" id="PRO_0000355270" description="Snaclec 9">
    <location>
        <begin position="24"/>
        <end position="146"/>
    </location>
</feature>
<feature type="domain" description="C-type lectin" evidence="3">
    <location>
        <begin position="32"/>
        <end position="143"/>
    </location>
</feature>
<feature type="disulfide bond" evidence="3">
    <location>
        <begin position="25"/>
        <end position="36"/>
    </location>
</feature>
<feature type="disulfide bond" evidence="3">
    <location>
        <begin position="53"/>
        <end position="142"/>
    </location>
</feature>
<feature type="disulfide bond" description="Interchain" evidence="3">
    <location>
        <position position="98"/>
    </location>
</feature>
<feature type="disulfide bond" evidence="3">
    <location>
        <begin position="119"/>
        <end position="134"/>
    </location>
</feature>
<comment type="function">
    <text evidence="1">Interferes with one step of hemostasis (modulation of platelet aggregation, or coagulation cascade, for example).</text>
</comment>
<comment type="subunit">
    <text evidence="1">Heterodimer; disulfide-linked.</text>
</comment>
<comment type="subcellular location">
    <subcellularLocation>
        <location evidence="1">Secreted</location>
    </subcellularLocation>
</comment>
<comment type="tissue specificity">
    <text>Expressed by the venom gland.</text>
</comment>
<comment type="miscellaneous">
    <text>Shows greater sequence similarity to the beta than alpha subunits compared to other heterodimer snaclecs.</text>
</comment>
<comment type="similarity">
    <text evidence="4">Belongs to the snaclec family.</text>
</comment>
<evidence type="ECO:0000250" key="1"/>
<evidence type="ECO:0000255" key="2"/>
<evidence type="ECO:0000255" key="3">
    <source>
        <dbReference type="PROSITE-ProRule" id="PRU00040"/>
    </source>
</evidence>
<evidence type="ECO:0000305" key="4"/>
<sequence>MGRFIFISFGLLVVFLSLSGTEAECLPDWFHYEGHCYRVFDEPKTWADAEKFCSEQANGGHLVSVHSKKEAGLVGVLAYQTLESPIVWMGLSKIWNQCDWTWTNGAKLKYEAWAEESYCIHITSKKKEWKSLPCRNYGHFVCKSPA</sequence>
<keyword id="KW-1015">Disulfide bond</keyword>
<keyword id="KW-1199">Hemostasis impairing toxin</keyword>
<keyword id="KW-0964">Secreted</keyword>
<keyword id="KW-0732">Signal</keyword>
<keyword id="KW-0800">Toxin</keyword>